<name>CHI2_COCIM</name>
<keyword id="KW-0119">Carbohydrate metabolism</keyword>
<keyword id="KW-1003">Cell membrane</keyword>
<keyword id="KW-0146">Chitin degradation</keyword>
<keyword id="KW-0147">Chitin-binding</keyword>
<keyword id="KW-0325">Glycoprotein</keyword>
<keyword id="KW-0326">Glycosidase</keyword>
<keyword id="KW-0336">GPI-anchor</keyword>
<keyword id="KW-0378">Hydrolase</keyword>
<keyword id="KW-0449">Lipoprotein</keyword>
<keyword id="KW-0472">Membrane</keyword>
<keyword id="KW-0624">Polysaccharide degradation</keyword>
<keyword id="KW-1185">Reference proteome</keyword>
<keyword id="KW-0732">Signal</keyword>
<reference key="1">
    <citation type="journal article" date="2009" name="Genome Res.">
        <title>Comparative genomic analyses of the human fungal pathogens Coccidioides and their relatives.</title>
        <authorList>
            <person name="Sharpton T.J."/>
            <person name="Stajich J.E."/>
            <person name="Rounsley S.D."/>
            <person name="Gardner M.J."/>
            <person name="Wortman J.R."/>
            <person name="Jordar V.S."/>
            <person name="Maiti R."/>
            <person name="Kodira C.D."/>
            <person name="Neafsey D.E."/>
            <person name="Zeng Q."/>
            <person name="Hung C.-Y."/>
            <person name="McMahan C."/>
            <person name="Muszewska A."/>
            <person name="Grynberg M."/>
            <person name="Mandel M.A."/>
            <person name="Kellner E.M."/>
            <person name="Barker B.M."/>
            <person name="Galgiani J.N."/>
            <person name="Orbach M.J."/>
            <person name="Kirkland T.N."/>
            <person name="Cole G.T."/>
            <person name="Henn M.R."/>
            <person name="Birren B.W."/>
            <person name="Taylor J.W."/>
        </authorList>
    </citation>
    <scope>NUCLEOTIDE SEQUENCE [LARGE SCALE GENOMIC DNA]</scope>
    <source>
        <strain>RS</strain>
    </source>
</reference>
<reference key="2">
    <citation type="journal article" date="2010" name="Genome Res.">
        <title>Population genomic sequencing of Coccidioides fungi reveals recent hybridization and transposon control.</title>
        <authorList>
            <person name="Neafsey D.E."/>
            <person name="Barker B.M."/>
            <person name="Sharpton T.J."/>
            <person name="Stajich J.E."/>
            <person name="Park D.J."/>
            <person name="Whiston E."/>
            <person name="Hung C.-Y."/>
            <person name="McMahan C."/>
            <person name="White J."/>
            <person name="Sykes S."/>
            <person name="Heiman D."/>
            <person name="Young S."/>
            <person name="Zeng Q."/>
            <person name="Abouelleil A."/>
            <person name="Aftuck L."/>
            <person name="Bessette D."/>
            <person name="Brown A."/>
            <person name="FitzGerald M."/>
            <person name="Lui A."/>
            <person name="Macdonald J.P."/>
            <person name="Priest M."/>
            <person name="Orbach M.J."/>
            <person name="Galgiani J.N."/>
            <person name="Kirkland T.N."/>
            <person name="Cole G.T."/>
            <person name="Birren B.W."/>
            <person name="Henn M.R."/>
            <person name="Taylor J.W."/>
            <person name="Rounsley S.D."/>
        </authorList>
    </citation>
    <scope>GENOME REANNOTATION</scope>
    <source>
        <strain>RS</strain>
    </source>
</reference>
<comment type="function">
    <text>May be associated with endosporulation.</text>
</comment>
<comment type="catalytic activity">
    <reaction>
        <text>Random endo-hydrolysis of N-acetyl-beta-D-glucosaminide (1-&gt;4)-beta-linkages in chitin and chitodextrins.</text>
        <dbReference type="EC" id="3.2.1.14"/>
    </reaction>
</comment>
<comment type="subcellular location">
    <subcellularLocation>
        <location evidence="4">Cell membrane</location>
        <topology evidence="4">Lipid-anchor</topology>
        <topology evidence="4">GPI-anchor</topology>
    </subcellularLocation>
</comment>
<comment type="similarity">
    <text evidence="4">Belongs to the glycosyl hydrolase 18 family. Chitinase class III subfamily.</text>
</comment>
<comment type="sequence caution" evidence="4">
    <conflict type="erroneous gene model prediction">
        <sequence resource="EMBL-CDS" id="EAS34994"/>
    </conflict>
</comment>
<feature type="signal peptide" evidence="1">
    <location>
        <begin position="1"/>
        <end position="22"/>
    </location>
</feature>
<feature type="chain" id="PRO_0000252287" description="Endochitinase 2">
    <location>
        <begin position="23"/>
        <end position="866"/>
    </location>
</feature>
<feature type="propeptide" id="PRO_0000252288" description="Removed in mature form" evidence="1">
    <location>
        <begin position="867"/>
        <end position="895"/>
    </location>
</feature>
<feature type="domain" description="GH18" evidence="2">
    <location>
        <begin position="29"/>
        <end position="340"/>
    </location>
</feature>
<feature type="region of interest" description="Disordered" evidence="3">
    <location>
        <begin position="343"/>
        <end position="712"/>
    </location>
</feature>
<feature type="compositionally biased region" description="Low complexity" evidence="3">
    <location>
        <begin position="346"/>
        <end position="425"/>
    </location>
</feature>
<feature type="compositionally biased region" description="Polar residues" evidence="3">
    <location>
        <begin position="426"/>
        <end position="478"/>
    </location>
</feature>
<feature type="compositionally biased region" description="Low complexity" evidence="3">
    <location>
        <begin position="479"/>
        <end position="505"/>
    </location>
</feature>
<feature type="compositionally biased region" description="Polar residues" evidence="3">
    <location>
        <begin position="506"/>
        <end position="543"/>
    </location>
</feature>
<feature type="compositionally biased region" description="Low complexity" evidence="3">
    <location>
        <begin position="544"/>
        <end position="555"/>
    </location>
</feature>
<feature type="compositionally biased region" description="Polar residues" evidence="3">
    <location>
        <begin position="556"/>
        <end position="577"/>
    </location>
</feature>
<feature type="compositionally biased region" description="Low complexity" evidence="3">
    <location>
        <begin position="578"/>
        <end position="589"/>
    </location>
</feature>
<feature type="compositionally biased region" description="Polar residues" evidence="3">
    <location>
        <begin position="590"/>
        <end position="657"/>
    </location>
</feature>
<feature type="compositionally biased region" description="Low complexity" evidence="3">
    <location>
        <begin position="658"/>
        <end position="692"/>
    </location>
</feature>
<feature type="compositionally biased region" description="Low complexity" evidence="3">
    <location>
        <begin position="699"/>
        <end position="712"/>
    </location>
</feature>
<feature type="active site" description="Proton donor" evidence="2">
    <location>
        <position position="175"/>
    </location>
</feature>
<feature type="lipid moiety-binding region" description="GPI-anchor amidated glycine" evidence="1">
    <location>
        <position position="866"/>
    </location>
</feature>
<feature type="glycosylation site" description="N-linked (GlcNAc...) asparagine" evidence="1">
    <location>
        <position position="90"/>
    </location>
</feature>
<protein>
    <recommendedName>
        <fullName>Endochitinase 2</fullName>
        <ecNumber>3.2.1.14</ecNumber>
    </recommendedName>
</protein>
<proteinExistence type="inferred from homology"/>
<sequence length="895" mass="94380">MGLTNILAAFIAVSSLFIQSLALNPYAKSNLAVYWGQGAGQNRLSYFCEKTSFDIIVVGFINVFPDQGPAGWPGSNFGNQCADSYYYTKNGTKTKLLDGCYQIKEDLPKCKALGKTILLSLGGGAVHDFYEVKSEESALNFADFLWGAFGPLTPDWTGPRPFGEASVDGFDFDIEKGSNFGYSIMVRRLRELFLQDPLNRYYISAAPQCIMPDKYLSHAISNSAFDFIFIQFYNNPSCSAKRWVTNPKSVTYTVDDWVKYIRKSGNPLAKLFIGLPASKSAAAKEDYLTPGEATKIVSTYMAKYPSTFGGMMVWEATASENNKLGGLPYADIMKEVLLRCDPDPPTSTVTSTISASTSTQTSSQSTTMETKTLSASTTPSSPSTVSPSSTMQTTSTGSTSTGTGTTSSQVTSSTTISTRSASTETVTTRSQEPPSTTISTRPASTETVTTRSQEPPSSTISTRSASTETVTTRSQEPPSSTISTRSASTETSTSSQDSPSTTISTKSAPTGTVTTRSQDLPSTTISTRSPETETETVTTKSQDSPSITLSTRSSSAETVSTRSQHSSSTTISTKSAPTETGTTSEHSTSMPVSTRSASTETVITRSQNSDSQSMTVSTRSPSTESITTRSQGSPSETFSTKSVPVDTISTELPSQTHSTTDSTPVSSSPTIPSGSTTIIPGTASDPVSAPTTTVPPNPTLTLAPSSSTTEDRTTITTIITTSYVTVCPTGFTTVTITYTTTYCPETASLTPTQAPIPGAPAPPPDGWTTIVTVCPQCAPTPTTVTLTVPTRSAFLPAPTETRPVVTVVPVPENPIKNVKPSESGDFVTVTTVAPATVTKTLEYNNPVDSDVNVQPTGGSSPVEFEGGAMTVRSMDVVAKALITAGAAVLGLFLGL</sequence>
<accession>Q1EAR5</accession>
<accession>J3KGU1</accession>
<evidence type="ECO:0000255" key="1"/>
<evidence type="ECO:0000255" key="2">
    <source>
        <dbReference type="PROSITE-ProRule" id="PRU01258"/>
    </source>
</evidence>
<evidence type="ECO:0000256" key="3">
    <source>
        <dbReference type="SAM" id="MobiDB-lite"/>
    </source>
</evidence>
<evidence type="ECO:0000305" key="4"/>
<dbReference type="EC" id="3.2.1.14"/>
<dbReference type="EMBL" id="GG704911">
    <property type="protein sequence ID" value="EAS34994.3"/>
    <property type="status" value="ALT_SEQ"/>
    <property type="molecule type" value="Genomic_DNA"/>
</dbReference>
<dbReference type="RefSeq" id="XP_001246577.2">
    <property type="nucleotide sequence ID" value="XM_001246576.2"/>
</dbReference>
<dbReference type="SMR" id="Q1EAR5"/>
<dbReference type="STRING" id="246410.Q1EAR5"/>
<dbReference type="GlyCosmos" id="Q1EAR5">
    <property type="glycosylation" value="1 site, No reported glycans"/>
</dbReference>
<dbReference type="GeneID" id="4565656"/>
<dbReference type="KEGG" id="cim:CIMG_00348"/>
<dbReference type="InParanoid" id="Q1EAR5"/>
<dbReference type="OrthoDB" id="6020543at2759"/>
<dbReference type="Proteomes" id="UP000001261">
    <property type="component" value="Unassembled WGS sequence"/>
</dbReference>
<dbReference type="GO" id="GO:0005576">
    <property type="term" value="C:extracellular region"/>
    <property type="evidence" value="ECO:0007669"/>
    <property type="project" value="TreeGrafter"/>
</dbReference>
<dbReference type="GO" id="GO:0005886">
    <property type="term" value="C:plasma membrane"/>
    <property type="evidence" value="ECO:0007669"/>
    <property type="project" value="UniProtKB-SubCell"/>
</dbReference>
<dbReference type="GO" id="GO:0098552">
    <property type="term" value="C:side of membrane"/>
    <property type="evidence" value="ECO:0007669"/>
    <property type="project" value="UniProtKB-KW"/>
</dbReference>
<dbReference type="GO" id="GO:0008061">
    <property type="term" value="F:chitin binding"/>
    <property type="evidence" value="ECO:0007669"/>
    <property type="project" value="UniProtKB-KW"/>
</dbReference>
<dbReference type="GO" id="GO:0008843">
    <property type="term" value="F:endochitinase activity"/>
    <property type="evidence" value="ECO:0007669"/>
    <property type="project" value="UniProtKB-EC"/>
</dbReference>
<dbReference type="GO" id="GO:0006032">
    <property type="term" value="P:chitin catabolic process"/>
    <property type="evidence" value="ECO:0007669"/>
    <property type="project" value="UniProtKB-KW"/>
</dbReference>
<dbReference type="GO" id="GO:0000272">
    <property type="term" value="P:polysaccharide catabolic process"/>
    <property type="evidence" value="ECO:0007669"/>
    <property type="project" value="UniProtKB-KW"/>
</dbReference>
<dbReference type="CDD" id="cd02877">
    <property type="entry name" value="GH18_hevamine_XipI_class_III"/>
    <property type="match status" value="1"/>
</dbReference>
<dbReference type="FunFam" id="3.20.20.80:FF:000150">
    <property type="entry name" value="Class III chitinase ChiA1"/>
    <property type="match status" value="1"/>
</dbReference>
<dbReference type="Gene3D" id="3.20.20.80">
    <property type="entry name" value="Glycosidases"/>
    <property type="match status" value="1"/>
</dbReference>
<dbReference type="InterPro" id="IPR045321">
    <property type="entry name" value="Cts1-like"/>
</dbReference>
<dbReference type="InterPro" id="IPR001223">
    <property type="entry name" value="Glyco_hydro18_cat"/>
</dbReference>
<dbReference type="InterPro" id="IPR001579">
    <property type="entry name" value="Glyco_hydro_18_chit_AS"/>
</dbReference>
<dbReference type="InterPro" id="IPR017853">
    <property type="entry name" value="Glycoside_hydrolase_SF"/>
</dbReference>
<dbReference type="InterPro" id="IPR050542">
    <property type="entry name" value="Glycosyl_Hydrlase18_Chitinase"/>
</dbReference>
<dbReference type="PANTHER" id="PTHR45708">
    <property type="entry name" value="ENDOCHITINASE"/>
    <property type="match status" value="1"/>
</dbReference>
<dbReference type="PANTHER" id="PTHR45708:SF47">
    <property type="entry name" value="ENDOCHITINASE A"/>
    <property type="match status" value="1"/>
</dbReference>
<dbReference type="Pfam" id="PF00704">
    <property type="entry name" value="Glyco_hydro_18"/>
    <property type="match status" value="1"/>
</dbReference>
<dbReference type="SUPFAM" id="SSF51445">
    <property type="entry name" value="(Trans)glycosidases"/>
    <property type="match status" value="1"/>
</dbReference>
<dbReference type="PROSITE" id="PS01095">
    <property type="entry name" value="GH18_1"/>
    <property type="match status" value="1"/>
</dbReference>
<dbReference type="PROSITE" id="PS51910">
    <property type="entry name" value="GH18_2"/>
    <property type="match status" value="1"/>
</dbReference>
<organism>
    <name type="scientific">Coccidioides immitis (strain RS)</name>
    <name type="common">Valley fever fungus</name>
    <dbReference type="NCBI Taxonomy" id="246410"/>
    <lineage>
        <taxon>Eukaryota</taxon>
        <taxon>Fungi</taxon>
        <taxon>Dikarya</taxon>
        <taxon>Ascomycota</taxon>
        <taxon>Pezizomycotina</taxon>
        <taxon>Eurotiomycetes</taxon>
        <taxon>Eurotiomycetidae</taxon>
        <taxon>Onygenales</taxon>
        <taxon>Onygenaceae</taxon>
        <taxon>Coccidioides</taxon>
    </lineage>
</organism>
<gene>
    <name type="primary">CTS2</name>
    <name type="ORF">CIMG_00348</name>
</gene>